<comment type="function">
    <text evidence="3">Is involved in NO detoxification in an aerobic process, termed nitric oxide dioxygenase (NOD) reaction that utilizes O(2) and NAD(P)H to convert NO to nitrate, which protects the fungus from various noxious nitrogen compounds. Therefore, plays a central role in the inducible response to nitrosative stress (By similarity).</text>
</comment>
<comment type="function">
    <text evidence="3">In the presence of oxygen and NADH, it has NADH oxidase activity, which leads to the generation of superoxide and H(2)O(2). Under anaerobic conditions, it also exhibits nitric oxide reductase and FAD reductase activities. However, all these reactions are much lower than NOD activity (By similarity).</text>
</comment>
<comment type="catalytic activity">
    <reaction>
        <text>2 nitric oxide + NADPH + 2 O2 = 2 nitrate + NADP(+) + H(+)</text>
        <dbReference type="Rhea" id="RHEA:19465"/>
        <dbReference type="ChEBI" id="CHEBI:15378"/>
        <dbReference type="ChEBI" id="CHEBI:15379"/>
        <dbReference type="ChEBI" id="CHEBI:16480"/>
        <dbReference type="ChEBI" id="CHEBI:17632"/>
        <dbReference type="ChEBI" id="CHEBI:57783"/>
        <dbReference type="ChEBI" id="CHEBI:58349"/>
        <dbReference type="EC" id="1.14.12.17"/>
    </reaction>
</comment>
<comment type="catalytic activity">
    <reaction>
        <text>2 nitric oxide + NADH + 2 O2 = 2 nitrate + NAD(+) + H(+)</text>
        <dbReference type="Rhea" id="RHEA:19469"/>
        <dbReference type="ChEBI" id="CHEBI:15378"/>
        <dbReference type="ChEBI" id="CHEBI:15379"/>
        <dbReference type="ChEBI" id="CHEBI:16480"/>
        <dbReference type="ChEBI" id="CHEBI:17632"/>
        <dbReference type="ChEBI" id="CHEBI:57540"/>
        <dbReference type="ChEBI" id="CHEBI:57945"/>
        <dbReference type="EC" id="1.14.12.17"/>
    </reaction>
</comment>
<comment type="cofactor">
    <cofactor evidence="4">
        <name>FAD</name>
        <dbReference type="ChEBI" id="CHEBI:57692"/>
    </cofactor>
    <text evidence="4">Binds 1 FAD per subunit.</text>
</comment>
<comment type="cofactor">
    <cofactor evidence="4">
        <name>heme b</name>
        <dbReference type="ChEBI" id="CHEBI:60344"/>
    </cofactor>
    <text evidence="4">Binds 1 heme b group per subunit.</text>
</comment>
<comment type="subcellular location">
    <subcellularLocation>
        <location evidence="8">Cytoplasm</location>
    </subcellularLocation>
    <subcellularLocation>
        <location evidence="8">Nucleus</location>
    </subcellularLocation>
</comment>
<comment type="domain">
    <text evidence="9">Consists of two distinct domains; a N-terminal heme-containing oxygen-binding domain and a C-terminal reductase domain with binding sites for FAD and NAD(P)H.</text>
</comment>
<comment type="similarity">
    <text evidence="6">Belongs to the globin family. Two-domain flavohemoproteins subfamily.</text>
</comment>
<comment type="similarity">
    <text evidence="5">In the C-terminal section; belongs to the flavoprotein pyridine nucleotide cytochrome reductase family.</text>
</comment>
<sequence>MSSVEVNRENADVANTNRQANLAEGYEIKELNESQKQYIRSSIPILESSGVNLTKAFYQKMLGNYPEVLPYFNKAHQISLSQPRILAFALLNYAKNIDDLTSLSAFMDQIVVKHVGLQIKAEHYPIVGHCLLSTMQELLPSDVATPAFLEAWTTAYGNLAKILIDSEKKVYQSQPWNGFVEFKVTELINESSDVKSVYLGPKDPAFRISHAHPGQYVSVLWEIPGLSHKTLREYSLSNRVDTCRNQFRISVRRVAGGVVSNFVHDNLKVGDIVGVSPPAGNFVYKRSEENVNRPLLCFAGGIGITPLIPIIETALLDGRKVNFCYSSRNYVSRPFKQWLEQLKLKYKENLKLKEFFSEESSVTKEQIVDEVMTRIINEEDLEKLDLSECDIYMLGPNNYMRFVKQELVKLGVEPNKVQSEFFGPYIP</sequence>
<reference evidence="10" key="1">
    <citation type="journal article" date="2002" name="Nature">
        <title>The genome sequence of Schizosaccharomyces pombe.</title>
        <authorList>
            <person name="Wood V."/>
            <person name="Gwilliam R."/>
            <person name="Rajandream M.A."/>
            <person name="Lyne M.H."/>
            <person name="Lyne R."/>
            <person name="Stewart A."/>
            <person name="Sgouros J.G."/>
            <person name="Peat N."/>
            <person name="Hayles J."/>
            <person name="Baker S.G."/>
            <person name="Basham D."/>
            <person name="Bowman S."/>
            <person name="Brooks K."/>
            <person name="Brown D."/>
            <person name="Brown S."/>
            <person name="Chillingworth T."/>
            <person name="Churcher C.M."/>
            <person name="Collins M."/>
            <person name="Connor R."/>
            <person name="Cronin A."/>
            <person name="Davis P."/>
            <person name="Feltwell T."/>
            <person name="Fraser A."/>
            <person name="Gentles S."/>
            <person name="Goble A."/>
            <person name="Hamlin N."/>
            <person name="Harris D.E."/>
            <person name="Hidalgo J."/>
            <person name="Hodgson G."/>
            <person name="Holroyd S."/>
            <person name="Hornsby T."/>
            <person name="Howarth S."/>
            <person name="Huckle E.J."/>
            <person name="Hunt S."/>
            <person name="Jagels K."/>
            <person name="James K.D."/>
            <person name="Jones L."/>
            <person name="Jones M."/>
            <person name="Leather S."/>
            <person name="McDonald S."/>
            <person name="McLean J."/>
            <person name="Mooney P."/>
            <person name="Moule S."/>
            <person name="Mungall K.L."/>
            <person name="Murphy L.D."/>
            <person name="Niblett D."/>
            <person name="Odell C."/>
            <person name="Oliver K."/>
            <person name="O'Neil S."/>
            <person name="Pearson D."/>
            <person name="Quail M.A."/>
            <person name="Rabbinowitsch E."/>
            <person name="Rutherford K.M."/>
            <person name="Rutter S."/>
            <person name="Saunders D."/>
            <person name="Seeger K."/>
            <person name="Sharp S."/>
            <person name="Skelton J."/>
            <person name="Simmonds M.N."/>
            <person name="Squares R."/>
            <person name="Squares S."/>
            <person name="Stevens K."/>
            <person name="Taylor K."/>
            <person name="Taylor R.G."/>
            <person name="Tivey A."/>
            <person name="Walsh S.V."/>
            <person name="Warren T."/>
            <person name="Whitehead S."/>
            <person name="Woodward J.R."/>
            <person name="Volckaert G."/>
            <person name="Aert R."/>
            <person name="Robben J."/>
            <person name="Grymonprez B."/>
            <person name="Weltjens I."/>
            <person name="Vanstreels E."/>
            <person name="Rieger M."/>
            <person name="Schaefer M."/>
            <person name="Mueller-Auer S."/>
            <person name="Gabel C."/>
            <person name="Fuchs M."/>
            <person name="Duesterhoeft A."/>
            <person name="Fritzc C."/>
            <person name="Holzer E."/>
            <person name="Moestl D."/>
            <person name="Hilbert H."/>
            <person name="Borzym K."/>
            <person name="Langer I."/>
            <person name="Beck A."/>
            <person name="Lehrach H."/>
            <person name="Reinhardt R."/>
            <person name="Pohl T.M."/>
            <person name="Eger P."/>
            <person name="Zimmermann W."/>
            <person name="Wedler H."/>
            <person name="Wambutt R."/>
            <person name="Purnelle B."/>
            <person name="Goffeau A."/>
            <person name="Cadieu E."/>
            <person name="Dreano S."/>
            <person name="Gloux S."/>
            <person name="Lelaure V."/>
            <person name="Mottier S."/>
            <person name="Galibert F."/>
            <person name="Aves S.J."/>
            <person name="Xiang Z."/>
            <person name="Hunt C."/>
            <person name="Moore K."/>
            <person name="Hurst S.M."/>
            <person name="Lucas M."/>
            <person name="Rochet M."/>
            <person name="Gaillardin C."/>
            <person name="Tallada V.A."/>
            <person name="Garzon A."/>
            <person name="Thode G."/>
            <person name="Daga R.R."/>
            <person name="Cruzado L."/>
            <person name="Jimenez J."/>
            <person name="Sanchez M."/>
            <person name="del Rey F."/>
            <person name="Benito J."/>
            <person name="Dominguez A."/>
            <person name="Revuelta J.L."/>
            <person name="Moreno S."/>
            <person name="Armstrong J."/>
            <person name="Forsburg S.L."/>
            <person name="Cerutti L."/>
            <person name="Lowe T."/>
            <person name="McCombie W.R."/>
            <person name="Paulsen I."/>
            <person name="Potashkin J."/>
            <person name="Shpakovski G.V."/>
            <person name="Ussery D."/>
            <person name="Barrell B.G."/>
            <person name="Nurse P."/>
        </authorList>
    </citation>
    <scope>NUCLEOTIDE SEQUENCE [LARGE SCALE GENOMIC DNA]</scope>
    <source>
        <strain>972 / ATCC 24843</strain>
    </source>
</reference>
<reference evidence="9" key="2">
    <citation type="journal article" date="2006" name="Nat. Biotechnol.">
        <title>ORFeome cloning and global analysis of protein localization in the fission yeast Schizosaccharomyces pombe.</title>
        <authorList>
            <person name="Matsuyama A."/>
            <person name="Arai R."/>
            <person name="Yashiroda Y."/>
            <person name="Shirai A."/>
            <person name="Kamata A."/>
            <person name="Sekido S."/>
            <person name="Kobayashi Y."/>
            <person name="Hashimoto A."/>
            <person name="Hamamoto M."/>
            <person name="Hiraoka Y."/>
            <person name="Horinouchi S."/>
            <person name="Yoshida M."/>
        </authorList>
    </citation>
    <scope>SUBCELLULAR LOCATION [LARGE SCALE ANALYSIS]</scope>
</reference>
<organism>
    <name type="scientific">Schizosaccharomyces pombe (strain 972 / ATCC 24843)</name>
    <name type="common">Fission yeast</name>
    <dbReference type="NCBI Taxonomy" id="284812"/>
    <lineage>
        <taxon>Eukaryota</taxon>
        <taxon>Fungi</taxon>
        <taxon>Dikarya</taxon>
        <taxon>Ascomycota</taxon>
        <taxon>Taphrinomycotina</taxon>
        <taxon>Schizosaccharomycetes</taxon>
        <taxon>Schizosaccharomycetales</taxon>
        <taxon>Schizosaccharomycetaceae</taxon>
        <taxon>Schizosaccharomyces</taxon>
    </lineage>
</organism>
<accession>Q9URY5</accession>
<gene>
    <name type="ORF">SPAC869.02c</name>
</gene>
<feature type="chain" id="PRO_0000280219" description="Flavohemoprotein">
    <location>
        <begin position="1"/>
        <end position="427"/>
    </location>
</feature>
<feature type="domain" description="Globin" evidence="6">
    <location>
        <begin position="30"/>
        <end position="168"/>
    </location>
</feature>
<feature type="domain" description="FAD-binding FR-type" evidence="7">
    <location>
        <begin position="177"/>
        <end position="285"/>
    </location>
</feature>
<feature type="region of interest" description="Reductase" evidence="5">
    <location>
        <begin position="176"/>
        <end position="427"/>
    </location>
</feature>
<feature type="active site" description="Charge relay system" evidence="2">
    <location>
        <position position="124"/>
    </location>
</feature>
<feature type="active site" description="Charge relay system" evidence="2">
    <location>
        <position position="167"/>
    </location>
</feature>
<feature type="binding site" description="proximal binding residue" evidence="2 6">
    <location>
        <position position="114"/>
    </location>
    <ligand>
        <name>heme b</name>
        <dbReference type="ChEBI" id="CHEBI:60344"/>
    </ligand>
    <ligandPart>
        <name>Fe</name>
        <dbReference type="ChEBI" id="CHEBI:18248"/>
    </ligandPart>
</feature>
<feature type="binding site" evidence="2">
    <location>
        <position position="216"/>
    </location>
    <ligand>
        <name>FAD</name>
        <dbReference type="ChEBI" id="CHEBI:57692"/>
    </ligand>
</feature>
<feature type="binding site" evidence="2">
    <location>
        <begin position="232"/>
        <end position="235"/>
    </location>
    <ligand>
        <name>FAD</name>
        <dbReference type="ChEBI" id="CHEBI:57692"/>
    </ligand>
</feature>
<feature type="binding site" evidence="1">
    <location>
        <begin position="301"/>
        <end position="306"/>
    </location>
    <ligand>
        <name>NADP(+)</name>
        <dbReference type="ChEBI" id="CHEBI:58349"/>
    </ligand>
</feature>
<feature type="binding site" evidence="2">
    <location>
        <begin position="421"/>
        <end position="424"/>
    </location>
    <ligand>
        <name>FAD</name>
        <dbReference type="ChEBI" id="CHEBI:57692"/>
    </ligand>
</feature>
<feature type="site" description="Involved in heme-bound ligand stabilization and O-O bond activation" evidence="2">
    <location>
        <position position="58"/>
    </location>
</feature>
<feature type="site" description="Influences the redox potential of the prosthetic heme and FAD groups" evidence="2">
    <location>
        <position position="113"/>
    </location>
</feature>
<feature type="site" description="Influences the redox potential of the prosthetic heme and FAD groups" evidence="2">
    <location>
        <position position="420"/>
    </location>
</feature>
<proteinExistence type="inferred from homology"/>
<protein>
    <recommendedName>
        <fullName>Flavohemoprotein</fullName>
        <ecNumber>1.14.12.17</ecNumber>
    </recommendedName>
    <alternativeName>
        <fullName>Flavohemoglobin</fullName>
    </alternativeName>
    <alternativeName>
        <fullName>Hemoglobin-like protein</fullName>
    </alternativeName>
    <alternativeName>
        <fullName>Nitric oxide dioxygenase</fullName>
        <shortName>NO oxygenase</shortName>
        <shortName>NOD</shortName>
    </alternativeName>
</protein>
<evidence type="ECO:0000250" key="1"/>
<evidence type="ECO:0000250" key="2">
    <source>
        <dbReference type="UniProtKB" id="P24232"/>
    </source>
</evidence>
<evidence type="ECO:0000250" key="3">
    <source>
        <dbReference type="UniProtKB" id="P39676"/>
    </source>
</evidence>
<evidence type="ECO:0000250" key="4">
    <source>
        <dbReference type="UniProtKB" id="Q03331"/>
    </source>
</evidence>
<evidence type="ECO:0000255" key="5"/>
<evidence type="ECO:0000255" key="6">
    <source>
        <dbReference type="PROSITE-ProRule" id="PRU00238"/>
    </source>
</evidence>
<evidence type="ECO:0000255" key="7">
    <source>
        <dbReference type="PROSITE-ProRule" id="PRU00716"/>
    </source>
</evidence>
<evidence type="ECO:0000269" key="8">
    <source>
    </source>
</evidence>
<evidence type="ECO:0000305" key="9"/>
<evidence type="ECO:0000312" key="10">
    <source>
        <dbReference type="EMBL" id="CAB60012.1"/>
    </source>
</evidence>
<dbReference type="EC" id="1.14.12.17"/>
<dbReference type="EMBL" id="CU329670">
    <property type="protein sequence ID" value="CAB60012.1"/>
    <property type="molecule type" value="Genomic_DNA"/>
</dbReference>
<dbReference type="PIR" id="T39113">
    <property type="entry name" value="T39113"/>
</dbReference>
<dbReference type="SMR" id="Q9URY5"/>
<dbReference type="BioGRID" id="278580">
    <property type="interactions" value="9"/>
</dbReference>
<dbReference type="FunCoup" id="Q9URY5">
    <property type="interactions" value="94"/>
</dbReference>
<dbReference type="STRING" id="284812.Q9URY5"/>
<dbReference type="iPTMnet" id="Q9URY5"/>
<dbReference type="PaxDb" id="4896-SPAC869.02c.1"/>
<dbReference type="EnsemblFungi" id="SPAC869.02c.1">
    <property type="protein sequence ID" value="SPAC869.02c.1:pep"/>
    <property type="gene ID" value="SPAC869.02c"/>
</dbReference>
<dbReference type="KEGG" id="spo:2542104"/>
<dbReference type="PomBase" id="SPAC869.02c"/>
<dbReference type="VEuPathDB" id="FungiDB:SPAC869.02c"/>
<dbReference type="eggNOG" id="KOG3378">
    <property type="taxonomic scope" value="Eukaryota"/>
</dbReference>
<dbReference type="HOGENOM" id="CLU_003827_12_0_1"/>
<dbReference type="InParanoid" id="Q9URY5"/>
<dbReference type="OMA" id="KLERMCN"/>
<dbReference type="PhylomeDB" id="Q9URY5"/>
<dbReference type="PRO" id="PR:Q9URY5"/>
<dbReference type="Proteomes" id="UP000002485">
    <property type="component" value="Chromosome I"/>
</dbReference>
<dbReference type="GO" id="GO:0005737">
    <property type="term" value="C:cytoplasm"/>
    <property type="evidence" value="ECO:0000318"/>
    <property type="project" value="GO_Central"/>
</dbReference>
<dbReference type="GO" id="GO:0005829">
    <property type="term" value="C:cytosol"/>
    <property type="evidence" value="ECO:0007005"/>
    <property type="project" value="PomBase"/>
</dbReference>
<dbReference type="GO" id="GO:0005739">
    <property type="term" value="C:mitochondrion"/>
    <property type="evidence" value="ECO:0000305"/>
    <property type="project" value="PomBase"/>
</dbReference>
<dbReference type="GO" id="GO:0005634">
    <property type="term" value="C:nucleus"/>
    <property type="evidence" value="ECO:0007005"/>
    <property type="project" value="PomBase"/>
</dbReference>
<dbReference type="GO" id="GO:0071949">
    <property type="term" value="F:FAD binding"/>
    <property type="evidence" value="ECO:0000318"/>
    <property type="project" value="GO_Central"/>
</dbReference>
<dbReference type="GO" id="GO:0020037">
    <property type="term" value="F:heme binding"/>
    <property type="evidence" value="ECO:0007669"/>
    <property type="project" value="InterPro"/>
</dbReference>
<dbReference type="GO" id="GO:0046872">
    <property type="term" value="F:metal ion binding"/>
    <property type="evidence" value="ECO:0007669"/>
    <property type="project" value="UniProtKB-KW"/>
</dbReference>
<dbReference type="GO" id="GO:0008941">
    <property type="term" value="F:nitric oxide dioxygenase NAD(P)H activity"/>
    <property type="evidence" value="ECO:0000318"/>
    <property type="project" value="GO_Central"/>
</dbReference>
<dbReference type="GO" id="GO:0019825">
    <property type="term" value="F:oxygen binding"/>
    <property type="evidence" value="ECO:0007669"/>
    <property type="project" value="InterPro"/>
</dbReference>
<dbReference type="GO" id="GO:0070458">
    <property type="term" value="P:cellular detoxification of nitrogen compound"/>
    <property type="evidence" value="ECO:0000316"/>
    <property type="project" value="PomBase"/>
</dbReference>
<dbReference type="GO" id="GO:0071500">
    <property type="term" value="P:cellular response to nitrosative stress"/>
    <property type="evidence" value="ECO:0000316"/>
    <property type="project" value="PomBase"/>
</dbReference>
<dbReference type="GO" id="GO:0046210">
    <property type="term" value="P:nitric oxide catabolic process"/>
    <property type="evidence" value="ECO:0000318"/>
    <property type="project" value="GO_Central"/>
</dbReference>
<dbReference type="CDD" id="cd19754">
    <property type="entry name" value="FHb_fungal-globin"/>
    <property type="match status" value="1"/>
</dbReference>
<dbReference type="CDD" id="cd06184">
    <property type="entry name" value="flavohem_like_fad_nad_binding"/>
    <property type="match status" value="1"/>
</dbReference>
<dbReference type="FunFam" id="1.10.490.10:FF:000003">
    <property type="entry name" value="Flavohemoprotein"/>
    <property type="match status" value="1"/>
</dbReference>
<dbReference type="Gene3D" id="1.10.490.10">
    <property type="entry name" value="Globins"/>
    <property type="match status" value="1"/>
</dbReference>
<dbReference type="Gene3D" id="3.40.50.80">
    <property type="entry name" value="Nucleotide-binding domain of ferredoxin-NADP reductase (FNR) module"/>
    <property type="match status" value="1"/>
</dbReference>
<dbReference type="Gene3D" id="2.40.30.10">
    <property type="entry name" value="Translation factors"/>
    <property type="match status" value="1"/>
</dbReference>
<dbReference type="InterPro" id="IPR008333">
    <property type="entry name" value="Cbr1-like_FAD-bd_dom"/>
</dbReference>
<dbReference type="InterPro" id="IPR017927">
    <property type="entry name" value="FAD-bd_FR_type"/>
</dbReference>
<dbReference type="InterPro" id="IPR039261">
    <property type="entry name" value="FNR_nucleotide-bd"/>
</dbReference>
<dbReference type="InterPro" id="IPR000971">
    <property type="entry name" value="Globin"/>
</dbReference>
<dbReference type="InterPro" id="IPR009050">
    <property type="entry name" value="Globin-like_sf"/>
</dbReference>
<dbReference type="InterPro" id="IPR012292">
    <property type="entry name" value="Globin/Proto"/>
</dbReference>
<dbReference type="InterPro" id="IPR001433">
    <property type="entry name" value="OxRdtase_FAD/NAD-bd"/>
</dbReference>
<dbReference type="InterPro" id="IPR017938">
    <property type="entry name" value="Riboflavin_synthase-like_b-brl"/>
</dbReference>
<dbReference type="PANTHER" id="PTHR43396">
    <property type="entry name" value="FLAVOHEMOPROTEIN"/>
    <property type="match status" value="1"/>
</dbReference>
<dbReference type="PANTHER" id="PTHR43396:SF3">
    <property type="entry name" value="FLAVOHEMOPROTEIN"/>
    <property type="match status" value="1"/>
</dbReference>
<dbReference type="Pfam" id="PF00970">
    <property type="entry name" value="FAD_binding_6"/>
    <property type="match status" value="1"/>
</dbReference>
<dbReference type="Pfam" id="PF00042">
    <property type="entry name" value="Globin"/>
    <property type="match status" value="1"/>
</dbReference>
<dbReference type="Pfam" id="PF00175">
    <property type="entry name" value="NAD_binding_1"/>
    <property type="match status" value="1"/>
</dbReference>
<dbReference type="SUPFAM" id="SSF52343">
    <property type="entry name" value="Ferredoxin reductase-like, C-terminal NADP-linked domain"/>
    <property type="match status" value="1"/>
</dbReference>
<dbReference type="SUPFAM" id="SSF46458">
    <property type="entry name" value="Globin-like"/>
    <property type="match status" value="1"/>
</dbReference>
<dbReference type="SUPFAM" id="SSF63380">
    <property type="entry name" value="Riboflavin synthase domain-like"/>
    <property type="match status" value="1"/>
</dbReference>
<dbReference type="PROSITE" id="PS51384">
    <property type="entry name" value="FAD_FR"/>
    <property type="match status" value="1"/>
</dbReference>
<dbReference type="PROSITE" id="PS01033">
    <property type="entry name" value="GLOBIN"/>
    <property type="match status" value="1"/>
</dbReference>
<keyword id="KW-0963">Cytoplasm</keyword>
<keyword id="KW-0216">Detoxification</keyword>
<keyword id="KW-0274">FAD</keyword>
<keyword id="KW-0285">Flavoprotein</keyword>
<keyword id="KW-0349">Heme</keyword>
<keyword id="KW-0408">Iron</keyword>
<keyword id="KW-0479">Metal-binding</keyword>
<keyword id="KW-0520">NAD</keyword>
<keyword id="KW-0521">NADP</keyword>
<keyword id="KW-0539">Nucleus</keyword>
<keyword id="KW-0560">Oxidoreductase</keyword>
<keyword id="KW-1185">Reference proteome</keyword>
<name>FHP_SCHPO</name>